<sequence>MTIKAILTDIEGTTSAVSFVFDVLFPYAARHLPDFVREHAGETEVAAQLAAVRAESGEADADVERVIAILLQWIAEDRKATPLKALQGMVWAQGYRDGQLKGHVYPDAVQALREWKARGLDLYVYSSGSIQAQKLIFGCSEAGDLGSLFSGYFDTTSGPKRESASYARIAGAIGLPAAEILFLSDVVQELDAARDAGMRTLGLAREGGSLDGHPTVASSPTSSWSERAGYPEGTLLLGSIAPWVPPSAG</sequence>
<gene>
    <name evidence="1" type="primary">mtnC</name>
    <name type="ordered locus">PA1685</name>
</gene>
<proteinExistence type="inferred from homology"/>
<keyword id="KW-0028">Amino-acid biosynthesis</keyword>
<keyword id="KW-0378">Hydrolase</keyword>
<keyword id="KW-0460">Magnesium</keyword>
<keyword id="KW-0479">Metal-binding</keyword>
<keyword id="KW-0486">Methionine biosynthesis</keyword>
<keyword id="KW-1185">Reference proteome</keyword>
<reference key="1">
    <citation type="journal article" date="2000" name="Nature">
        <title>Complete genome sequence of Pseudomonas aeruginosa PAO1, an opportunistic pathogen.</title>
        <authorList>
            <person name="Stover C.K."/>
            <person name="Pham X.-Q.T."/>
            <person name="Erwin A.L."/>
            <person name="Mizoguchi S.D."/>
            <person name="Warrener P."/>
            <person name="Hickey M.J."/>
            <person name="Brinkman F.S.L."/>
            <person name="Hufnagle W.O."/>
            <person name="Kowalik D.J."/>
            <person name="Lagrou M."/>
            <person name="Garber R.L."/>
            <person name="Goltry L."/>
            <person name="Tolentino E."/>
            <person name="Westbrock-Wadman S."/>
            <person name="Yuan Y."/>
            <person name="Brody L.L."/>
            <person name="Coulter S.N."/>
            <person name="Folger K.R."/>
            <person name="Kas A."/>
            <person name="Larbig K."/>
            <person name="Lim R.M."/>
            <person name="Smith K.A."/>
            <person name="Spencer D.H."/>
            <person name="Wong G.K.-S."/>
            <person name="Wu Z."/>
            <person name="Paulsen I.T."/>
            <person name="Reizer J."/>
            <person name="Saier M.H. Jr."/>
            <person name="Hancock R.E.W."/>
            <person name="Lory S."/>
            <person name="Olson M.V."/>
        </authorList>
    </citation>
    <scope>NUCLEOTIDE SEQUENCE [LARGE SCALE GENOMIC DNA]</scope>
    <source>
        <strain>ATCC 15692 / DSM 22644 / CIP 104116 / JCM 14847 / LMG 12228 / 1C / PRS 101 / PAO1</strain>
    </source>
</reference>
<accession>Q9I340</accession>
<name>MTNC_PSEAE</name>
<evidence type="ECO:0000255" key="1">
    <source>
        <dbReference type="HAMAP-Rule" id="MF_01681"/>
    </source>
</evidence>
<feature type="chain" id="PRO_0000357387" description="Enolase-phosphatase E1">
    <location>
        <begin position="1"/>
        <end position="249"/>
    </location>
</feature>
<dbReference type="EC" id="3.1.3.77" evidence="1"/>
<dbReference type="EMBL" id="AE004091">
    <property type="protein sequence ID" value="AAG05074.1"/>
    <property type="molecule type" value="Genomic_DNA"/>
</dbReference>
<dbReference type="PIR" id="F83436">
    <property type="entry name" value="F83436"/>
</dbReference>
<dbReference type="RefSeq" id="WP_003147428.1">
    <property type="nucleotide sequence ID" value="NZ_CP053028.1"/>
</dbReference>
<dbReference type="SMR" id="Q9I340"/>
<dbReference type="STRING" id="208964.PA1685"/>
<dbReference type="PaxDb" id="208964-PA1685"/>
<dbReference type="KEGG" id="pae:PA1685"/>
<dbReference type="PATRIC" id="fig|208964.12.peg.1746"/>
<dbReference type="PseudoCAP" id="PA1685"/>
<dbReference type="HOGENOM" id="CLU_023273_0_0_6"/>
<dbReference type="InParanoid" id="Q9I340"/>
<dbReference type="OrthoDB" id="9797416at2"/>
<dbReference type="PhylomeDB" id="Q9I340"/>
<dbReference type="BioCyc" id="PAER208964:G1FZ6-1716-MONOMER"/>
<dbReference type="UniPathway" id="UPA00904">
    <property type="reaction ID" value="UER00876"/>
</dbReference>
<dbReference type="UniPathway" id="UPA00904">
    <property type="reaction ID" value="UER00877"/>
</dbReference>
<dbReference type="Proteomes" id="UP000002438">
    <property type="component" value="Chromosome"/>
</dbReference>
<dbReference type="GO" id="GO:0043715">
    <property type="term" value="F:2,3-diketo-5-methylthiopentyl-1-phosphate enolase activity"/>
    <property type="evidence" value="ECO:0007669"/>
    <property type="project" value="UniProtKB-UniRule"/>
</dbReference>
<dbReference type="GO" id="GO:0043716">
    <property type="term" value="F:2-hydroxy-3-keto-5-methylthiopentenyl-1-phosphate phosphatase activity"/>
    <property type="evidence" value="ECO:0007669"/>
    <property type="project" value="UniProtKB-UniRule"/>
</dbReference>
<dbReference type="GO" id="GO:0043874">
    <property type="term" value="F:acireductone synthase activity"/>
    <property type="evidence" value="ECO:0000318"/>
    <property type="project" value="GO_Central"/>
</dbReference>
<dbReference type="GO" id="GO:0000287">
    <property type="term" value="F:magnesium ion binding"/>
    <property type="evidence" value="ECO:0007669"/>
    <property type="project" value="UniProtKB-UniRule"/>
</dbReference>
<dbReference type="GO" id="GO:0019509">
    <property type="term" value="P:L-methionine salvage from methylthioadenosine"/>
    <property type="evidence" value="ECO:0000318"/>
    <property type="project" value="GO_Central"/>
</dbReference>
<dbReference type="CDD" id="cd01629">
    <property type="entry name" value="HAD_EP"/>
    <property type="match status" value="1"/>
</dbReference>
<dbReference type="FunFam" id="1.10.720.60:FF:000003">
    <property type="entry name" value="Enolase-phosphatase E1"/>
    <property type="match status" value="1"/>
</dbReference>
<dbReference type="FunFam" id="3.40.50.1000:FF:000079">
    <property type="entry name" value="Enolase-phosphatase E1"/>
    <property type="match status" value="1"/>
</dbReference>
<dbReference type="Gene3D" id="1.10.720.60">
    <property type="match status" value="1"/>
</dbReference>
<dbReference type="Gene3D" id="3.40.50.1000">
    <property type="entry name" value="HAD superfamily/HAD-like"/>
    <property type="match status" value="1"/>
</dbReference>
<dbReference type="HAMAP" id="MF_01681">
    <property type="entry name" value="Salvage_MtnC"/>
    <property type="match status" value="1"/>
</dbReference>
<dbReference type="InterPro" id="IPR023943">
    <property type="entry name" value="Enolase-ppase_E1"/>
</dbReference>
<dbReference type="InterPro" id="IPR036412">
    <property type="entry name" value="HAD-like_sf"/>
</dbReference>
<dbReference type="InterPro" id="IPR023214">
    <property type="entry name" value="HAD_sf"/>
</dbReference>
<dbReference type="NCBIfam" id="TIGR01691">
    <property type="entry name" value="enolase-ppase"/>
    <property type="match status" value="1"/>
</dbReference>
<dbReference type="PANTHER" id="PTHR20371">
    <property type="entry name" value="ENOLASE-PHOSPHATASE E1"/>
    <property type="match status" value="1"/>
</dbReference>
<dbReference type="PANTHER" id="PTHR20371:SF1">
    <property type="entry name" value="ENOLASE-PHOSPHATASE E1"/>
    <property type="match status" value="1"/>
</dbReference>
<dbReference type="Pfam" id="PF00702">
    <property type="entry name" value="Hydrolase"/>
    <property type="match status" value="1"/>
</dbReference>
<dbReference type="SFLD" id="SFLDF00044">
    <property type="entry name" value="enolase-phosphatase"/>
    <property type="match status" value="1"/>
</dbReference>
<dbReference type="SFLD" id="SFLDS00003">
    <property type="entry name" value="Haloacid_Dehalogenase"/>
    <property type="match status" value="1"/>
</dbReference>
<dbReference type="SUPFAM" id="SSF56784">
    <property type="entry name" value="HAD-like"/>
    <property type="match status" value="1"/>
</dbReference>
<protein>
    <recommendedName>
        <fullName evidence="1">Enolase-phosphatase E1</fullName>
        <ecNumber evidence="1">3.1.3.77</ecNumber>
    </recommendedName>
    <alternativeName>
        <fullName evidence="1">2,3-diketo-5-methylthio-1-phosphopentane phosphatase</fullName>
    </alternativeName>
</protein>
<organism>
    <name type="scientific">Pseudomonas aeruginosa (strain ATCC 15692 / DSM 22644 / CIP 104116 / JCM 14847 / LMG 12228 / 1C / PRS 101 / PAO1)</name>
    <dbReference type="NCBI Taxonomy" id="208964"/>
    <lineage>
        <taxon>Bacteria</taxon>
        <taxon>Pseudomonadati</taxon>
        <taxon>Pseudomonadota</taxon>
        <taxon>Gammaproteobacteria</taxon>
        <taxon>Pseudomonadales</taxon>
        <taxon>Pseudomonadaceae</taxon>
        <taxon>Pseudomonas</taxon>
    </lineage>
</organism>
<comment type="function">
    <text evidence="1">Bifunctional enzyme that catalyzes the enolization of 2,3-diketo-5-methylthiopentyl-1-phosphate (DK-MTP-1-P) into the intermediate 2-hydroxy-3-keto-5-methylthiopentenyl-1-phosphate (HK-MTPenyl-1-P), which is then dephosphorylated to form the acireductone 1,2-dihydroxy-3-keto-5-methylthiopentene (DHK-MTPene).</text>
</comment>
<comment type="catalytic activity">
    <reaction evidence="1">
        <text>5-methylsulfanyl-2,3-dioxopentyl phosphate + H2O = 1,2-dihydroxy-5-(methylsulfanyl)pent-1-en-3-one + phosphate</text>
        <dbReference type="Rhea" id="RHEA:21700"/>
        <dbReference type="ChEBI" id="CHEBI:15377"/>
        <dbReference type="ChEBI" id="CHEBI:43474"/>
        <dbReference type="ChEBI" id="CHEBI:49252"/>
        <dbReference type="ChEBI" id="CHEBI:58828"/>
        <dbReference type="EC" id="3.1.3.77"/>
    </reaction>
</comment>
<comment type="cofactor">
    <cofactor evidence="1">
        <name>Mg(2+)</name>
        <dbReference type="ChEBI" id="CHEBI:18420"/>
    </cofactor>
    <text evidence="1">Binds 1 Mg(2+) ion per subunit.</text>
</comment>
<comment type="pathway">
    <text evidence="1">Amino-acid biosynthesis; L-methionine biosynthesis via salvage pathway; L-methionine from S-methyl-5-thio-alpha-D-ribose 1-phosphate: step 3/6.</text>
</comment>
<comment type="pathway">
    <text evidence="1">Amino-acid biosynthesis; L-methionine biosynthesis via salvage pathway; L-methionine from S-methyl-5-thio-alpha-D-ribose 1-phosphate: step 4/6.</text>
</comment>
<comment type="subunit">
    <text evidence="1">Monomer.</text>
</comment>
<comment type="similarity">
    <text evidence="1">Belongs to the HAD-like hydrolase superfamily. MasA/MtnC family.</text>
</comment>